<protein>
    <recommendedName>
        <fullName>Alcohol dehydrogenase 1</fullName>
        <ecNumber>1.1.1.1</ecNumber>
    </recommendedName>
</protein>
<gene>
    <name type="primary">Adh1</name>
</gene>
<comment type="catalytic activity">
    <reaction evidence="2">
        <text>a primary alcohol + NAD(+) = an aldehyde + NADH + H(+)</text>
        <dbReference type="Rhea" id="RHEA:10736"/>
        <dbReference type="ChEBI" id="CHEBI:15378"/>
        <dbReference type="ChEBI" id="CHEBI:15734"/>
        <dbReference type="ChEBI" id="CHEBI:17478"/>
        <dbReference type="ChEBI" id="CHEBI:57540"/>
        <dbReference type="ChEBI" id="CHEBI:57945"/>
        <dbReference type="EC" id="1.1.1.1"/>
    </reaction>
</comment>
<comment type="catalytic activity">
    <reaction evidence="2">
        <text>a secondary alcohol + NAD(+) = a ketone + NADH + H(+)</text>
        <dbReference type="Rhea" id="RHEA:10740"/>
        <dbReference type="ChEBI" id="CHEBI:15378"/>
        <dbReference type="ChEBI" id="CHEBI:17087"/>
        <dbReference type="ChEBI" id="CHEBI:35681"/>
        <dbReference type="ChEBI" id="CHEBI:57540"/>
        <dbReference type="ChEBI" id="CHEBI:57945"/>
        <dbReference type="EC" id="1.1.1.1"/>
    </reaction>
</comment>
<comment type="subunit">
    <text>Homodimer.</text>
</comment>
<comment type="similarity">
    <text evidence="3">Belongs to the short-chain dehydrogenases/reductases (SDR) family.</text>
</comment>
<dbReference type="EC" id="1.1.1.1"/>
<dbReference type="EMBL" id="X15585">
    <property type="protein sequence ID" value="CAA33610.1"/>
    <property type="molecule type" value="Genomic_DNA"/>
</dbReference>
<dbReference type="PIR" id="S06001">
    <property type="entry name" value="S06001"/>
</dbReference>
<dbReference type="SMR" id="P12854"/>
<dbReference type="OrthoDB" id="417891at2759"/>
<dbReference type="GO" id="GO:0005737">
    <property type="term" value="C:cytoplasm"/>
    <property type="evidence" value="ECO:0007669"/>
    <property type="project" value="TreeGrafter"/>
</dbReference>
<dbReference type="GO" id="GO:0004022">
    <property type="term" value="F:alcohol dehydrogenase (NAD+) activity"/>
    <property type="evidence" value="ECO:0007669"/>
    <property type="project" value="UniProtKB-EC"/>
</dbReference>
<dbReference type="GO" id="GO:0006066">
    <property type="term" value="P:alcohol metabolic process"/>
    <property type="evidence" value="ECO:0007669"/>
    <property type="project" value="InterPro"/>
</dbReference>
<dbReference type="CDD" id="cd05323">
    <property type="entry name" value="ADH_SDR_c_like"/>
    <property type="match status" value="1"/>
</dbReference>
<dbReference type="FunFam" id="3.40.50.720:FF:000302">
    <property type="entry name" value="Alcohol dehydrogenase"/>
    <property type="match status" value="1"/>
</dbReference>
<dbReference type="Gene3D" id="3.40.50.720">
    <property type="entry name" value="NAD(P)-binding Rossmann-like Domain"/>
    <property type="match status" value="1"/>
</dbReference>
<dbReference type="InterPro" id="IPR002425">
    <property type="entry name" value="ADH_Drosophila-type"/>
</dbReference>
<dbReference type="InterPro" id="IPR036291">
    <property type="entry name" value="NAD(P)-bd_dom_sf"/>
</dbReference>
<dbReference type="InterPro" id="IPR020904">
    <property type="entry name" value="Sc_DH/Rdtase_CS"/>
</dbReference>
<dbReference type="InterPro" id="IPR002347">
    <property type="entry name" value="SDR_fam"/>
</dbReference>
<dbReference type="PANTHER" id="PTHR44229">
    <property type="entry name" value="15-HYDROXYPROSTAGLANDIN DEHYDROGENASE [NAD(+)]"/>
    <property type="match status" value="1"/>
</dbReference>
<dbReference type="PANTHER" id="PTHR44229:SF8">
    <property type="entry name" value="ALCOHOL DEHYDROGENASE-RELATED"/>
    <property type="match status" value="1"/>
</dbReference>
<dbReference type="Pfam" id="PF00106">
    <property type="entry name" value="adh_short"/>
    <property type="match status" value="1"/>
</dbReference>
<dbReference type="PRINTS" id="PR01168">
    <property type="entry name" value="ALCDHDRGNASE"/>
</dbReference>
<dbReference type="PRINTS" id="PR01167">
    <property type="entry name" value="INSADHFAMILY"/>
</dbReference>
<dbReference type="PRINTS" id="PR00080">
    <property type="entry name" value="SDRFAMILY"/>
</dbReference>
<dbReference type="SUPFAM" id="SSF51735">
    <property type="entry name" value="NAD(P)-binding Rossmann-fold domains"/>
    <property type="match status" value="1"/>
</dbReference>
<dbReference type="PROSITE" id="PS00061">
    <property type="entry name" value="ADH_SHORT"/>
    <property type="match status" value="1"/>
</dbReference>
<proteinExistence type="inferred from homology"/>
<keyword id="KW-0520">NAD</keyword>
<keyword id="KW-0560">Oxidoreductase</keyword>
<sequence length="254" mass="27547">MAIANKNIIFVAGLGGIGFDTSREIVKSGPKNLVILDRIENPAAIAELKALNPKVTVTFYPYDVTVPVAETTKLLKTIFDKLKTVDLLINGAGILDDYQIERTIAVNFTGTVNTTTAIMSFWDKRKGGPGGVIANICSVTGFNAIYQVPVYSASKAAALSFTNSLAKLAPITGVTAYSINPGITKTTLVHKFNSWLDVEPRVAELLLEHPTQTSLECAQNFVKAIEANQNGAIWKLDLGTLEAIEWTKHWDSHI</sequence>
<accession>P12854</accession>
<name>ADH1_DRONA</name>
<reference key="1">
    <citation type="journal article" date="1989" name="Nucleic Acids Res.">
        <title>Nucleotide sequence of the Adh-1 gene of Drosophila navojoa.</title>
        <authorList>
            <person name="Weaver J.R."/>
            <person name="Andrews J.M."/>
            <person name="Sullivan D.T."/>
        </authorList>
    </citation>
    <scope>NUCLEOTIDE SEQUENCE [GENOMIC DNA]</scope>
</reference>
<feature type="initiator methionine" description="Removed">
    <location>
        <position position="1"/>
    </location>
</feature>
<feature type="chain" id="PRO_0000054484" description="Alcohol dehydrogenase 1">
    <location>
        <begin position="2"/>
        <end position="254"/>
    </location>
</feature>
<feature type="active site" description="Proton acceptor" evidence="2">
    <location>
        <position position="151"/>
    </location>
</feature>
<feature type="binding site" evidence="1">
    <location>
        <begin position="10"/>
        <end position="33"/>
    </location>
    <ligand>
        <name>NAD(+)</name>
        <dbReference type="ChEBI" id="CHEBI:57540"/>
    </ligand>
</feature>
<feature type="binding site" evidence="1">
    <location>
        <position position="138"/>
    </location>
    <ligand>
        <name>substrate</name>
    </ligand>
</feature>
<evidence type="ECO:0000250" key="1"/>
<evidence type="ECO:0000255" key="2">
    <source>
        <dbReference type="PROSITE-ProRule" id="PRU10001"/>
    </source>
</evidence>
<evidence type="ECO:0000305" key="3"/>
<organism>
    <name type="scientific">Drosophila navojoa</name>
    <name type="common">Fruit fly</name>
    <dbReference type="NCBI Taxonomy" id="7232"/>
    <lineage>
        <taxon>Eukaryota</taxon>
        <taxon>Metazoa</taxon>
        <taxon>Ecdysozoa</taxon>
        <taxon>Arthropoda</taxon>
        <taxon>Hexapoda</taxon>
        <taxon>Insecta</taxon>
        <taxon>Pterygota</taxon>
        <taxon>Neoptera</taxon>
        <taxon>Endopterygota</taxon>
        <taxon>Diptera</taxon>
        <taxon>Brachycera</taxon>
        <taxon>Muscomorpha</taxon>
        <taxon>Ephydroidea</taxon>
        <taxon>Drosophilidae</taxon>
        <taxon>Drosophila</taxon>
    </lineage>
</organism>